<protein>
    <recommendedName>
        <fullName>Common plant regulatory factor 1</fullName>
        <shortName>CPRF-1</shortName>
    </recommendedName>
</protein>
<feature type="chain" id="PRO_0000076572" description="Common plant regulatory factor 1">
    <location>
        <begin position="1"/>
        <end position="411"/>
    </location>
</feature>
<feature type="domain" description="bZIP" evidence="1">
    <location>
        <begin position="269"/>
        <end position="332"/>
    </location>
</feature>
<feature type="region of interest" description="Disordered" evidence="2">
    <location>
        <begin position="1"/>
        <end position="30"/>
    </location>
</feature>
<feature type="region of interest" description="Disordered" evidence="2">
    <location>
        <begin position="130"/>
        <end position="197"/>
    </location>
</feature>
<feature type="region of interest" description="Disordered" evidence="2">
    <location>
        <begin position="232"/>
        <end position="293"/>
    </location>
</feature>
<feature type="region of interest" description="Basic motif" evidence="1">
    <location>
        <begin position="271"/>
        <end position="290"/>
    </location>
</feature>
<feature type="region of interest" description="Leucine-zipper" evidence="1">
    <location>
        <begin position="297"/>
        <end position="332"/>
    </location>
</feature>
<feature type="region of interest" description="Disordered" evidence="2">
    <location>
        <begin position="346"/>
        <end position="411"/>
    </location>
</feature>
<feature type="compositionally biased region" description="Basic and acidic residues" evidence="2">
    <location>
        <begin position="1"/>
        <end position="14"/>
    </location>
</feature>
<feature type="compositionally biased region" description="Polar residues" evidence="2">
    <location>
        <begin position="148"/>
        <end position="164"/>
    </location>
</feature>
<feature type="compositionally biased region" description="Basic and acidic residues" evidence="2">
    <location>
        <begin position="235"/>
        <end position="244"/>
    </location>
</feature>
<feature type="compositionally biased region" description="Polar residues" evidence="2">
    <location>
        <begin position="249"/>
        <end position="259"/>
    </location>
</feature>
<feature type="compositionally biased region" description="Basic and acidic residues" evidence="2">
    <location>
        <begin position="264"/>
        <end position="293"/>
    </location>
</feature>
<proteinExistence type="evidence at transcript level"/>
<name>CPRF1_PETCR</name>
<gene>
    <name type="primary">CPRF1</name>
    <name type="synonym">CPRF-1</name>
</gene>
<accession>Q99089</accession>
<dbReference type="EMBL" id="X58575">
    <property type="protein sequence ID" value="CAA41451.1"/>
    <property type="molecule type" value="mRNA"/>
</dbReference>
<dbReference type="EMBL" id="U46217">
    <property type="protein sequence ID" value="AAC49398.1"/>
    <property type="molecule type" value="Genomic_DNA"/>
</dbReference>
<dbReference type="PIR" id="S16322">
    <property type="entry name" value="S16322"/>
</dbReference>
<dbReference type="SMR" id="Q99089"/>
<dbReference type="GO" id="GO:0005634">
    <property type="term" value="C:nucleus"/>
    <property type="evidence" value="ECO:0007669"/>
    <property type="project" value="UniProtKB-SubCell"/>
</dbReference>
<dbReference type="GO" id="GO:0003700">
    <property type="term" value="F:DNA-binding transcription factor activity"/>
    <property type="evidence" value="ECO:0007669"/>
    <property type="project" value="InterPro"/>
</dbReference>
<dbReference type="GO" id="GO:0000976">
    <property type="term" value="F:transcription cis-regulatory region binding"/>
    <property type="evidence" value="ECO:0007669"/>
    <property type="project" value="UniProtKB-ARBA"/>
</dbReference>
<dbReference type="CDD" id="cd14702">
    <property type="entry name" value="bZIP_plant_GBF1"/>
    <property type="match status" value="1"/>
</dbReference>
<dbReference type="Gene3D" id="1.20.5.170">
    <property type="match status" value="1"/>
</dbReference>
<dbReference type="InterPro" id="IPR004827">
    <property type="entry name" value="bZIP"/>
</dbReference>
<dbReference type="InterPro" id="IPR045314">
    <property type="entry name" value="bZIP_plant_GBF1"/>
</dbReference>
<dbReference type="InterPro" id="IPR046347">
    <property type="entry name" value="bZIP_sf"/>
</dbReference>
<dbReference type="InterPro" id="IPR044827">
    <property type="entry name" value="GBF-like"/>
</dbReference>
<dbReference type="InterPro" id="IPR012900">
    <property type="entry name" value="MFMR"/>
</dbReference>
<dbReference type="PANTHER" id="PTHR45967:SF1">
    <property type="entry name" value="G-BOX-BINDING FACTOR 3"/>
    <property type="match status" value="1"/>
</dbReference>
<dbReference type="PANTHER" id="PTHR45967">
    <property type="entry name" value="G-BOX-BINDING FACTOR 3-RELATED"/>
    <property type="match status" value="1"/>
</dbReference>
<dbReference type="Pfam" id="PF00170">
    <property type="entry name" value="bZIP_1"/>
    <property type="match status" value="1"/>
</dbReference>
<dbReference type="Pfam" id="PF07777">
    <property type="entry name" value="MFMR"/>
    <property type="match status" value="1"/>
</dbReference>
<dbReference type="Pfam" id="PF16596">
    <property type="entry name" value="MFMR_assoc"/>
    <property type="match status" value="1"/>
</dbReference>
<dbReference type="SMART" id="SM00338">
    <property type="entry name" value="BRLZ"/>
    <property type="match status" value="1"/>
</dbReference>
<dbReference type="SUPFAM" id="SSF57959">
    <property type="entry name" value="Leucine zipper domain"/>
    <property type="match status" value="1"/>
</dbReference>
<dbReference type="PROSITE" id="PS50217">
    <property type="entry name" value="BZIP"/>
    <property type="match status" value="1"/>
</dbReference>
<dbReference type="PROSITE" id="PS00036">
    <property type="entry name" value="BZIP_BASIC"/>
    <property type="match status" value="1"/>
</dbReference>
<organism>
    <name type="scientific">Petroselinum crispum</name>
    <name type="common">Parsley</name>
    <name type="synonym">Petroselinum hortense</name>
    <dbReference type="NCBI Taxonomy" id="4043"/>
    <lineage>
        <taxon>Eukaryota</taxon>
        <taxon>Viridiplantae</taxon>
        <taxon>Streptophyta</taxon>
        <taxon>Embryophyta</taxon>
        <taxon>Tracheophyta</taxon>
        <taxon>Spermatophyta</taxon>
        <taxon>Magnoliopsida</taxon>
        <taxon>eudicotyledons</taxon>
        <taxon>Gunneridae</taxon>
        <taxon>Pentapetalae</taxon>
        <taxon>asterids</taxon>
        <taxon>campanulids</taxon>
        <taxon>Apiales</taxon>
        <taxon>Apiaceae</taxon>
        <taxon>Apioideae</taxon>
        <taxon>apioid superclade</taxon>
        <taxon>Apieae</taxon>
        <taxon>Petroselinum</taxon>
    </lineage>
</organism>
<reference key="1">
    <citation type="journal article" date="1991" name="EMBO J.">
        <title>Light-inducible and constitutively expressed DNA-binding proteins recognizing a plant promoter element with functional relevance in light responsiveness.</title>
        <authorList>
            <person name="Weisshaar B."/>
            <person name="Armstrong G.A."/>
            <person name="Block A."/>
            <person name="da Costa e Silva O."/>
            <person name="Hahlbrock K."/>
        </authorList>
    </citation>
    <scope>NUCLEOTIDE SEQUENCE [MRNA]</scope>
</reference>
<reference key="2">
    <citation type="journal article" date="1996" name="Mol. Gen. Genet.">
        <title>The transcriptional regulator CPRF1: expression analysis and gene structure.</title>
        <authorList>
            <person name="Feldbruegge M."/>
            <person name="Hahlbrock K."/>
            <person name="Weisshaar B."/>
        </authorList>
    </citation>
    <scope>NUCLEOTIDE SEQUENCE [GENOMIC DNA]</scope>
    <source>
        <strain>cv. Hamburger Schnitt</strain>
    </source>
</reference>
<keyword id="KW-0238">DNA-binding</keyword>
<keyword id="KW-0539">Nucleus</keyword>
<keyword id="KW-0804">Transcription</keyword>
<keyword id="KW-0805">Transcription regulation</keyword>
<sequence length="411" mass="43990">MGNTDDVKAVKPEKLSSPPPPAAPDQSNSHVYPDWAAMQAYYGPRVALPPYFNPAVASGQSPHPYMWGPPQPVMPPYGVPYAALYAHGGVYAHPGVPLAASPMSMDTHAKSSGTNEHGLIKKLKGHDDLAMSIGNGKADSSEGEMERTLSQSKETEGSSDGSNENSKRAAVNGRKRGRDEAPNMIGEVKIETQSSVIPSPRAKSEKLLGITVATPMVAGKVVGTVVSPSMTSSLELKDSPKEHAVNSPAGGQQPSTMMPNDSWLHNDRDLKRERRKQSNRESARRSRLRKQAEAEELAIKVDSLTAENMALKAEINRLTLTAEKLTNDNSRLLEVMKNAQAERAADVGLGNNNEKKASTLSTANLLSRVDNAGSGDRDEGESDVYEKTTKSGAKLHQLLDANPRTDAVAAG</sequence>
<comment type="function">
    <text>Binds to the G-box-like motif (5'-ACGTGGC-3') of the chalcone synthase (CHS) gene promoter. G-box and G-box-like motifs are defined in promoters of certain plant genes which are regulated by such diverse stimuli as light-induction or hormone control.</text>
</comment>
<comment type="subunit">
    <text>Binds DNA as a dimer.</text>
</comment>
<comment type="subcellular location">
    <subcellularLocation>
        <location>Nucleus</location>
    </subcellularLocation>
</comment>
<comment type="induction">
    <text>By light.</text>
</comment>
<comment type="similarity">
    <text evidence="3">Belongs to the bZIP family.</text>
</comment>
<evidence type="ECO:0000255" key="1">
    <source>
        <dbReference type="PROSITE-ProRule" id="PRU00978"/>
    </source>
</evidence>
<evidence type="ECO:0000256" key="2">
    <source>
        <dbReference type="SAM" id="MobiDB-lite"/>
    </source>
</evidence>
<evidence type="ECO:0000305" key="3"/>